<proteinExistence type="evidence at transcript level"/>
<comment type="function">
    <text evidence="1">Catalyzes the transfer of a two-carbon ketol group from a ketose donor to an aldose acceptor, via a covalent intermediate with the cofactor thiamine pyrophosphate.</text>
</comment>
<comment type="catalytic activity">
    <reaction>
        <text>D-sedoheptulose 7-phosphate + D-glyceraldehyde 3-phosphate = aldehydo-D-ribose 5-phosphate + D-xylulose 5-phosphate</text>
        <dbReference type="Rhea" id="RHEA:10508"/>
        <dbReference type="ChEBI" id="CHEBI:57483"/>
        <dbReference type="ChEBI" id="CHEBI:57737"/>
        <dbReference type="ChEBI" id="CHEBI:58273"/>
        <dbReference type="ChEBI" id="CHEBI:59776"/>
        <dbReference type="EC" id="2.2.1.1"/>
    </reaction>
</comment>
<comment type="cofactor">
    <cofactor evidence="1">
        <name>Mg(2+)</name>
        <dbReference type="ChEBI" id="CHEBI:18420"/>
    </cofactor>
    <cofactor evidence="1">
        <name>Ca(2+)</name>
        <dbReference type="ChEBI" id="CHEBI:29108"/>
    </cofactor>
    <cofactor evidence="1">
        <name>Mn(2+)</name>
        <dbReference type="ChEBI" id="CHEBI:29035"/>
    </cofactor>
    <cofactor evidence="1">
        <name>Co(2+)</name>
        <dbReference type="ChEBI" id="CHEBI:48828"/>
    </cofactor>
    <text evidence="1">Binds 1 Mg(2+) ion per subunit. Can also utilize other divalent metal cations, such as Ca(2+), Mn(2+) and Co(2+).</text>
</comment>
<comment type="cofactor">
    <cofactor evidence="1">
        <name>thiamine diphosphate</name>
        <dbReference type="ChEBI" id="CHEBI:58937"/>
    </cofactor>
    <text evidence="1">Binds 1 thiamine pyrophosphate per subunit.</text>
</comment>
<comment type="subunit">
    <text evidence="1">Homodimer.</text>
</comment>
<comment type="similarity">
    <text evidence="2">Belongs to the transketolase family.</text>
</comment>
<gene>
    <name type="ORF">SPBC2G5.05</name>
</gene>
<reference key="1">
    <citation type="journal article" date="2002" name="Nature">
        <title>The genome sequence of Schizosaccharomyces pombe.</title>
        <authorList>
            <person name="Wood V."/>
            <person name="Gwilliam R."/>
            <person name="Rajandream M.A."/>
            <person name="Lyne M.H."/>
            <person name="Lyne R."/>
            <person name="Stewart A."/>
            <person name="Sgouros J.G."/>
            <person name="Peat N."/>
            <person name="Hayles J."/>
            <person name="Baker S.G."/>
            <person name="Basham D."/>
            <person name="Bowman S."/>
            <person name="Brooks K."/>
            <person name="Brown D."/>
            <person name="Brown S."/>
            <person name="Chillingworth T."/>
            <person name="Churcher C.M."/>
            <person name="Collins M."/>
            <person name="Connor R."/>
            <person name="Cronin A."/>
            <person name="Davis P."/>
            <person name="Feltwell T."/>
            <person name="Fraser A."/>
            <person name="Gentles S."/>
            <person name="Goble A."/>
            <person name="Hamlin N."/>
            <person name="Harris D.E."/>
            <person name="Hidalgo J."/>
            <person name="Hodgson G."/>
            <person name="Holroyd S."/>
            <person name="Hornsby T."/>
            <person name="Howarth S."/>
            <person name="Huckle E.J."/>
            <person name="Hunt S."/>
            <person name="Jagels K."/>
            <person name="James K.D."/>
            <person name="Jones L."/>
            <person name="Jones M."/>
            <person name="Leather S."/>
            <person name="McDonald S."/>
            <person name="McLean J."/>
            <person name="Mooney P."/>
            <person name="Moule S."/>
            <person name="Mungall K.L."/>
            <person name="Murphy L.D."/>
            <person name="Niblett D."/>
            <person name="Odell C."/>
            <person name="Oliver K."/>
            <person name="O'Neil S."/>
            <person name="Pearson D."/>
            <person name="Quail M.A."/>
            <person name="Rabbinowitsch E."/>
            <person name="Rutherford K.M."/>
            <person name="Rutter S."/>
            <person name="Saunders D."/>
            <person name="Seeger K."/>
            <person name="Sharp S."/>
            <person name="Skelton J."/>
            <person name="Simmonds M.N."/>
            <person name="Squares R."/>
            <person name="Squares S."/>
            <person name="Stevens K."/>
            <person name="Taylor K."/>
            <person name="Taylor R.G."/>
            <person name="Tivey A."/>
            <person name="Walsh S.V."/>
            <person name="Warren T."/>
            <person name="Whitehead S."/>
            <person name="Woodward J.R."/>
            <person name="Volckaert G."/>
            <person name="Aert R."/>
            <person name="Robben J."/>
            <person name="Grymonprez B."/>
            <person name="Weltjens I."/>
            <person name="Vanstreels E."/>
            <person name="Rieger M."/>
            <person name="Schaefer M."/>
            <person name="Mueller-Auer S."/>
            <person name="Gabel C."/>
            <person name="Fuchs M."/>
            <person name="Duesterhoeft A."/>
            <person name="Fritzc C."/>
            <person name="Holzer E."/>
            <person name="Moestl D."/>
            <person name="Hilbert H."/>
            <person name="Borzym K."/>
            <person name="Langer I."/>
            <person name="Beck A."/>
            <person name="Lehrach H."/>
            <person name="Reinhardt R."/>
            <person name="Pohl T.M."/>
            <person name="Eger P."/>
            <person name="Zimmermann W."/>
            <person name="Wedler H."/>
            <person name="Wambutt R."/>
            <person name="Purnelle B."/>
            <person name="Goffeau A."/>
            <person name="Cadieu E."/>
            <person name="Dreano S."/>
            <person name="Gloux S."/>
            <person name="Lelaure V."/>
            <person name="Mottier S."/>
            <person name="Galibert F."/>
            <person name="Aves S.J."/>
            <person name="Xiang Z."/>
            <person name="Hunt C."/>
            <person name="Moore K."/>
            <person name="Hurst S.M."/>
            <person name="Lucas M."/>
            <person name="Rochet M."/>
            <person name="Gaillardin C."/>
            <person name="Tallada V.A."/>
            <person name="Garzon A."/>
            <person name="Thode G."/>
            <person name="Daga R.R."/>
            <person name="Cruzado L."/>
            <person name="Jimenez J."/>
            <person name="Sanchez M."/>
            <person name="del Rey F."/>
            <person name="Benito J."/>
            <person name="Dominguez A."/>
            <person name="Revuelta J.L."/>
            <person name="Moreno S."/>
            <person name="Armstrong J."/>
            <person name="Forsburg S.L."/>
            <person name="Cerutti L."/>
            <person name="Lowe T."/>
            <person name="McCombie W.R."/>
            <person name="Paulsen I."/>
            <person name="Potashkin J."/>
            <person name="Shpakovski G.V."/>
            <person name="Ussery D."/>
            <person name="Barrell B.G."/>
            <person name="Nurse P."/>
        </authorList>
    </citation>
    <scope>NUCLEOTIDE SEQUENCE [LARGE SCALE GENOMIC DNA]</scope>
    <source>
        <strain>972 / ATCC 24843</strain>
    </source>
</reference>
<reference key="2">
    <citation type="journal article" date="1997" name="DNA Res.">
        <title>Identification of open reading frames in Schizosaccharomyces pombe cDNAs.</title>
        <authorList>
            <person name="Yoshioka S."/>
            <person name="Kato K."/>
            <person name="Nakai K."/>
            <person name="Okayama H."/>
            <person name="Nojima H."/>
        </authorList>
    </citation>
    <scope>NUCLEOTIDE SEQUENCE [LARGE SCALE MRNA] OF 242-685</scope>
    <source>
        <strain>PR745</strain>
    </source>
</reference>
<feature type="chain" id="PRO_0000191903" description="Probable transketolase">
    <location>
        <begin position="1"/>
        <end position="685"/>
    </location>
</feature>
<feature type="active site" description="Proton donor" evidence="1">
    <location>
        <position position="422"/>
    </location>
</feature>
<feature type="binding site" evidence="1">
    <location>
        <position position="32"/>
    </location>
    <ligand>
        <name>substrate</name>
    </ligand>
</feature>
<feature type="binding site" evidence="1">
    <location>
        <position position="72"/>
    </location>
    <ligand>
        <name>thiamine diphosphate</name>
        <dbReference type="ChEBI" id="CHEBI:58937"/>
    </ligand>
</feature>
<feature type="binding site" evidence="1">
    <location>
        <begin position="121"/>
        <end position="123"/>
    </location>
    <ligand>
        <name>thiamine diphosphate</name>
        <dbReference type="ChEBI" id="CHEBI:58937"/>
    </ligand>
</feature>
<feature type="binding site" evidence="1">
    <location>
        <position position="162"/>
    </location>
    <ligand>
        <name>Mg(2+)</name>
        <dbReference type="ChEBI" id="CHEBI:18420"/>
    </ligand>
</feature>
<feature type="binding site" evidence="1">
    <location>
        <position position="163"/>
    </location>
    <ligand>
        <name>thiamine diphosphate</name>
        <dbReference type="ChEBI" id="CHEBI:58937"/>
    </ligand>
</feature>
<feature type="binding site" evidence="1">
    <location>
        <position position="192"/>
    </location>
    <ligand>
        <name>Mg(2+)</name>
        <dbReference type="ChEBI" id="CHEBI:18420"/>
    </ligand>
</feature>
<feature type="binding site" evidence="1">
    <location>
        <position position="192"/>
    </location>
    <ligand>
        <name>thiamine diphosphate</name>
        <dbReference type="ChEBI" id="CHEBI:58937"/>
    </ligand>
</feature>
<feature type="binding site" evidence="1">
    <location>
        <position position="194"/>
    </location>
    <ligand>
        <name>Mg(2+)</name>
        <dbReference type="ChEBI" id="CHEBI:18420"/>
    </ligand>
</feature>
<feature type="binding site" evidence="1">
    <location>
        <position position="268"/>
    </location>
    <ligand>
        <name>substrate</name>
    </ligand>
</feature>
<feature type="binding site" evidence="1">
    <location>
        <position position="268"/>
    </location>
    <ligand>
        <name>thiamine diphosphate</name>
        <dbReference type="ChEBI" id="CHEBI:58937"/>
    </ligand>
</feature>
<feature type="binding site" evidence="1">
    <location>
        <position position="363"/>
    </location>
    <ligand>
        <name>substrate</name>
    </ligand>
</feature>
<feature type="binding site" evidence="1">
    <location>
        <position position="390"/>
    </location>
    <ligand>
        <name>substrate</name>
    </ligand>
</feature>
<feature type="binding site" evidence="1">
    <location>
        <position position="422"/>
    </location>
    <ligand>
        <name>thiamine diphosphate</name>
        <dbReference type="ChEBI" id="CHEBI:58937"/>
    </ligand>
</feature>
<feature type="binding site" evidence="1">
    <location>
        <position position="448"/>
    </location>
    <ligand>
        <name>thiamine diphosphate</name>
        <dbReference type="ChEBI" id="CHEBI:58937"/>
    </ligand>
</feature>
<feature type="binding site" evidence="1">
    <location>
        <position position="472"/>
    </location>
    <ligand>
        <name>substrate</name>
    </ligand>
</feature>
<feature type="binding site" evidence="1">
    <location>
        <position position="480"/>
    </location>
    <ligand>
        <name>substrate</name>
    </ligand>
</feature>
<feature type="binding site" evidence="1">
    <location>
        <position position="531"/>
    </location>
    <ligand>
        <name>substrate</name>
    </ligand>
</feature>
<feature type="site" description="Important for catalytic activity" evidence="1">
    <location>
        <position position="32"/>
    </location>
</feature>
<feature type="site" description="Important for catalytic activity" evidence="1">
    <location>
        <position position="268"/>
    </location>
</feature>
<accession>Q9URM2</accession>
<accession>P78824</accession>
<keyword id="KW-0106">Calcium</keyword>
<keyword id="KW-0460">Magnesium</keyword>
<keyword id="KW-0479">Metal-binding</keyword>
<keyword id="KW-1185">Reference proteome</keyword>
<keyword id="KW-0786">Thiamine pyrophosphate</keyword>
<keyword id="KW-0808">Transferase</keyword>
<protein>
    <recommendedName>
        <fullName>Probable transketolase</fullName>
        <shortName>TK</shortName>
        <ecNumber>2.2.1.1</ecNumber>
    </recommendedName>
</protein>
<evidence type="ECO:0000250" key="1"/>
<evidence type="ECO:0000305" key="2"/>
<sequence length="685" mass="75182">MTSSSYTDIDTLAINTIRTLAVDTTAHAKSGHPGAPMGLAPAAHVLFSRIMKFNPAHPKWLNRDRFILSNGHACVLQYIMCHLLGYKLTIEDLKQFRQVGSKTPGHPETHNPDLNIETGAGPLGQGIASAVGLAIGKAHSAAVYNKPGFDLFSNYTFCFLGDGCLQEGVSSEACSLAGHLKLSNLIAVWDNNKITIDGATSMSFDEDVEKRFEAYGWNIVRVANGDTDLDGIEKGFREAMSCTDKPTLINLKTTIGYGSELQGTHSVHGSPLKPEDCVHVKKLFGFDPTKTFQVPPEVYAYYKERVAIASSAEEEYKKMYASYKQSYPDLSNQLERILSRKFPEGWEKHLPVYKPGDKAVATRKLSEIVLDALCPVLPELVGGSADLTPSNLTRWEGAADFQPPSSKLGTYAGRYIRYGIREHGMAGIMNGLAVYGPIIPYGGTFLNFVSYAAGAVRMAALNNSRVIYVATHDSIGLGEDGPTHQPIETFAHFRAMPNINCWRPADGNETSAAYYSALTSDSTPSILALTRQNLPQLENSTIENALKGGYVMLENKEADITLVGTGSEVSLCIDTVKTLETEYNLKARVVSLPCWEVFEQQPESYRLSVIPDGIPAMSVEVWATNGWRRYVHEAFGMHTFGDSGPAPKLYEKFHFTTSGVAQRAKKTVDAYKDIPYIRSPVRRAF</sequence>
<name>TKT_SCHPO</name>
<dbReference type="EC" id="2.2.1.1"/>
<dbReference type="EMBL" id="CU329671">
    <property type="protein sequence ID" value="CAA21881.1"/>
    <property type="molecule type" value="Genomic_DNA"/>
</dbReference>
<dbReference type="EMBL" id="D89172">
    <property type="protein sequence ID" value="BAA13834.1"/>
    <property type="molecule type" value="mRNA"/>
</dbReference>
<dbReference type="PIR" id="T40162">
    <property type="entry name" value="T40162"/>
</dbReference>
<dbReference type="PIR" id="T42537">
    <property type="entry name" value="T42537"/>
</dbReference>
<dbReference type="SMR" id="Q9URM2"/>
<dbReference type="BioGRID" id="276969">
    <property type="interactions" value="5"/>
</dbReference>
<dbReference type="FunCoup" id="Q9URM2">
    <property type="interactions" value="506"/>
</dbReference>
<dbReference type="STRING" id="284812.Q9URM2"/>
<dbReference type="iPTMnet" id="Q9URM2"/>
<dbReference type="PaxDb" id="4896-SPBC2G5.05.1"/>
<dbReference type="EnsemblFungi" id="SPBC2G5.05.1">
    <property type="protein sequence ID" value="SPBC2G5.05.1:pep"/>
    <property type="gene ID" value="SPBC2G5.05"/>
</dbReference>
<dbReference type="KEGG" id="spo:2540441"/>
<dbReference type="PomBase" id="SPBC2G5.05"/>
<dbReference type="VEuPathDB" id="FungiDB:SPBC2G5.05"/>
<dbReference type="eggNOG" id="KOG0523">
    <property type="taxonomic scope" value="Eukaryota"/>
</dbReference>
<dbReference type="HOGENOM" id="CLU_009227_0_0_1"/>
<dbReference type="InParanoid" id="Q9URM2"/>
<dbReference type="OMA" id="ADYMRGS"/>
<dbReference type="PhylomeDB" id="Q9URM2"/>
<dbReference type="PRO" id="PR:Q9URM2"/>
<dbReference type="Proteomes" id="UP000002485">
    <property type="component" value="Chromosome II"/>
</dbReference>
<dbReference type="GO" id="GO:0005829">
    <property type="term" value="C:cytosol"/>
    <property type="evidence" value="ECO:0007005"/>
    <property type="project" value="PomBase"/>
</dbReference>
<dbReference type="GO" id="GO:0005634">
    <property type="term" value="C:nucleus"/>
    <property type="evidence" value="ECO:0007005"/>
    <property type="project" value="PomBase"/>
</dbReference>
<dbReference type="GO" id="GO:0046872">
    <property type="term" value="F:metal ion binding"/>
    <property type="evidence" value="ECO:0007669"/>
    <property type="project" value="UniProtKB-KW"/>
</dbReference>
<dbReference type="GO" id="GO:0004802">
    <property type="term" value="F:transketolase activity"/>
    <property type="evidence" value="ECO:0000269"/>
    <property type="project" value="PomBase"/>
</dbReference>
<dbReference type="GO" id="GO:0006098">
    <property type="term" value="P:pentose-phosphate shunt"/>
    <property type="evidence" value="ECO:0000318"/>
    <property type="project" value="GO_Central"/>
</dbReference>
<dbReference type="GO" id="GO:0009052">
    <property type="term" value="P:pentose-phosphate shunt, non-oxidative branch"/>
    <property type="evidence" value="ECO:0000269"/>
    <property type="project" value="PomBase"/>
</dbReference>
<dbReference type="CDD" id="cd07033">
    <property type="entry name" value="TPP_PYR_DXS_TK_like"/>
    <property type="match status" value="1"/>
</dbReference>
<dbReference type="CDD" id="cd02012">
    <property type="entry name" value="TPP_TK"/>
    <property type="match status" value="1"/>
</dbReference>
<dbReference type="FunFam" id="3.40.50.920:FF:000003">
    <property type="entry name" value="Transketolase"/>
    <property type="match status" value="1"/>
</dbReference>
<dbReference type="FunFam" id="3.40.50.970:FF:000003">
    <property type="entry name" value="Transketolase"/>
    <property type="match status" value="1"/>
</dbReference>
<dbReference type="FunFam" id="3.40.50.970:FF:000004">
    <property type="entry name" value="Transketolase"/>
    <property type="match status" value="1"/>
</dbReference>
<dbReference type="Gene3D" id="3.40.50.920">
    <property type="match status" value="1"/>
</dbReference>
<dbReference type="Gene3D" id="3.40.50.970">
    <property type="match status" value="2"/>
</dbReference>
<dbReference type="InterPro" id="IPR029061">
    <property type="entry name" value="THDP-binding"/>
</dbReference>
<dbReference type="InterPro" id="IPR009014">
    <property type="entry name" value="Transketo_C/PFOR_II"/>
</dbReference>
<dbReference type="InterPro" id="IPR055152">
    <property type="entry name" value="Transketolase-like_C_2"/>
</dbReference>
<dbReference type="InterPro" id="IPR005475">
    <property type="entry name" value="Transketolase-like_Pyr-bd"/>
</dbReference>
<dbReference type="InterPro" id="IPR005478">
    <property type="entry name" value="Transketolase_bac-like"/>
</dbReference>
<dbReference type="InterPro" id="IPR020826">
    <property type="entry name" value="Transketolase_BS"/>
</dbReference>
<dbReference type="InterPro" id="IPR049557">
    <property type="entry name" value="Transketolase_CS"/>
</dbReference>
<dbReference type="InterPro" id="IPR033247">
    <property type="entry name" value="Transketolase_fam"/>
</dbReference>
<dbReference type="InterPro" id="IPR005474">
    <property type="entry name" value="Transketolase_N"/>
</dbReference>
<dbReference type="NCBIfam" id="TIGR00232">
    <property type="entry name" value="tktlase_bact"/>
    <property type="match status" value="1"/>
</dbReference>
<dbReference type="PANTHER" id="PTHR43522">
    <property type="entry name" value="TRANSKETOLASE"/>
    <property type="match status" value="1"/>
</dbReference>
<dbReference type="PANTHER" id="PTHR43522:SF2">
    <property type="entry name" value="TRANSKETOLASE 1-RELATED"/>
    <property type="match status" value="1"/>
</dbReference>
<dbReference type="Pfam" id="PF02779">
    <property type="entry name" value="Transket_pyr"/>
    <property type="match status" value="1"/>
</dbReference>
<dbReference type="Pfam" id="PF22613">
    <property type="entry name" value="Transketolase_C_1"/>
    <property type="match status" value="1"/>
</dbReference>
<dbReference type="Pfam" id="PF00456">
    <property type="entry name" value="Transketolase_N"/>
    <property type="match status" value="1"/>
</dbReference>
<dbReference type="SMART" id="SM00861">
    <property type="entry name" value="Transket_pyr"/>
    <property type="match status" value="1"/>
</dbReference>
<dbReference type="SUPFAM" id="SSF52518">
    <property type="entry name" value="Thiamin diphosphate-binding fold (THDP-binding)"/>
    <property type="match status" value="2"/>
</dbReference>
<dbReference type="SUPFAM" id="SSF52922">
    <property type="entry name" value="TK C-terminal domain-like"/>
    <property type="match status" value="1"/>
</dbReference>
<dbReference type="PROSITE" id="PS00801">
    <property type="entry name" value="TRANSKETOLASE_1"/>
    <property type="match status" value="1"/>
</dbReference>
<dbReference type="PROSITE" id="PS00802">
    <property type="entry name" value="TRANSKETOLASE_2"/>
    <property type="match status" value="1"/>
</dbReference>
<organism>
    <name type="scientific">Schizosaccharomyces pombe (strain 972 / ATCC 24843)</name>
    <name type="common">Fission yeast</name>
    <dbReference type="NCBI Taxonomy" id="284812"/>
    <lineage>
        <taxon>Eukaryota</taxon>
        <taxon>Fungi</taxon>
        <taxon>Dikarya</taxon>
        <taxon>Ascomycota</taxon>
        <taxon>Taphrinomycotina</taxon>
        <taxon>Schizosaccharomycetes</taxon>
        <taxon>Schizosaccharomycetales</taxon>
        <taxon>Schizosaccharomycetaceae</taxon>
        <taxon>Schizosaccharomyces</taxon>
    </lineage>
</organism>